<gene>
    <name evidence="1" type="primary">leuD</name>
    <name type="ordered locus">AAur_2485</name>
</gene>
<accession>A1R7J9</accession>
<evidence type="ECO:0000255" key="1">
    <source>
        <dbReference type="HAMAP-Rule" id="MF_01031"/>
    </source>
</evidence>
<reference key="1">
    <citation type="journal article" date="2006" name="PLoS Genet.">
        <title>Secrets of soil survival revealed by the genome sequence of Arthrobacter aurescens TC1.</title>
        <authorList>
            <person name="Mongodin E.F."/>
            <person name="Shapir N."/>
            <person name="Daugherty S.C."/>
            <person name="DeBoy R.T."/>
            <person name="Emerson J.B."/>
            <person name="Shvartzbeyn A."/>
            <person name="Radune D."/>
            <person name="Vamathevan J."/>
            <person name="Riggs F."/>
            <person name="Grinberg V."/>
            <person name="Khouri H.M."/>
            <person name="Wackett L.P."/>
            <person name="Nelson K.E."/>
            <person name="Sadowsky M.J."/>
        </authorList>
    </citation>
    <scope>NUCLEOTIDE SEQUENCE [LARGE SCALE GENOMIC DNA]</scope>
    <source>
        <strain>TC1</strain>
    </source>
</reference>
<feature type="chain" id="PRO_1000063730" description="3-isopropylmalate dehydratase small subunit">
    <location>
        <begin position="1"/>
        <end position="202"/>
    </location>
</feature>
<comment type="function">
    <text evidence="1">Catalyzes the isomerization between 2-isopropylmalate and 3-isopropylmalate, via the formation of 2-isopropylmaleate.</text>
</comment>
<comment type="catalytic activity">
    <reaction evidence="1">
        <text>(2R,3S)-3-isopropylmalate = (2S)-2-isopropylmalate</text>
        <dbReference type="Rhea" id="RHEA:32287"/>
        <dbReference type="ChEBI" id="CHEBI:1178"/>
        <dbReference type="ChEBI" id="CHEBI:35121"/>
        <dbReference type="EC" id="4.2.1.33"/>
    </reaction>
</comment>
<comment type="pathway">
    <text evidence="1">Amino-acid biosynthesis; L-leucine biosynthesis; L-leucine from 3-methyl-2-oxobutanoate: step 2/4.</text>
</comment>
<comment type="subunit">
    <text evidence="1">Heterodimer of LeuC and LeuD.</text>
</comment>
<comment type="similarity">
    <text evidence="1">Belongs to the LeuD family. LeuD type 1 subfamily.</text>
</comment>
<keyword id="KW-0028">Amino-acid biosynthesis</keyword>
<keyword id="KW-0100">Branched-chain amino acid biosynthesis</keyword>
<keyword id="KW-0432">Leucine biosynthesis</keyword>
<keyword id="KW-0456">Lyase</keyword>
<organism>
    <name type="scientific">Paenarthrobacter aurescens (strain TC1)</name>
    <dbReference type="NCBI Taxonomy" id="290340"/>
    <lineage>
        <taxon>Bacteria</taxon>
        <taxon>Bacillati</taxon>
        <taxon>Actinomycetota</taxon>
        <taxon>Actinomycetes</taxon>
        <taxon>Micrococcales</taxon>
        <taxon>Micrococcaceae</taxon>
        <taxon>Paenarthrobacter</taxon>
    </lineage>
</organism>
<protein>
    <recommendedName>
        <fullName evidence="1">3-isopropylmalate dehydratase small subunit</fullName>
        <ecNumber evidence="1">4.2.1.33</ecNumber>
    </recommendedName>
    <alternativeName>
        <fullName evidence="1">Alpha-IPM isomerase</fullName>
        <shortName evidence="1">IPMI</shortName>
    </alternativeName>
    <alternativeName>
        <fullName evidence="1">Isopropylmalate isomerase</fullName>
    </alternativeName>
</protein>
<name>LEUD_PAEAT</name>
<sequence>MEAFTTHTGIGVPLRQSNVDTDQIIPAVYLKRITRTGFEDALFAAWRKDESFILNQAPFNAGSVLVAGPDFGTGSSREHAVWALKDYGFKAVLSSRFADIFRGNSGKQGLLAAQVAQDDIELIWKVLENHPGTEIKVDLVSKTVECGNVVAPFEIDDYTRWRLLEGLDDIGLTLQHEADITAYEATRPSFKPKTLPAKVQAQ</sequence>
<proteinExistence type="inferred from homology"/>
<dbReference type="EC" id="4.2.1.33" evidence="1"/>
<dbReference type="EMBL" id="CP000474">
    <property type="protein sequence ID" value="ABM09670.1"/>
    <property type="molecule type" value="Genomic_DNA"/>
</dbReference>
<dbReference type="RefSeq" id="WP_011775153.1">
    <property type="nucleotide sequence ID" value="NC_008711.1"/>
</dbReference>
<dbReference type="SMR" id="A1R7J9"/>
<dbReference type="STRING" id="290340.AAur_2485"/>
<dbReference type="KEGG" id="aau:AAur_2485"/>
<dbReference type="eggNOG" id="COG0066">
    <property type="taxonomic scope" value="Bacteria"/>
</dbReference>
<dbReference type="HOGENOM" id="CLU_081378_0_1_11"/>
<dbReference type="OrthoDB" id="9777465at2"/>
<dbReference type="UniPathway" id="UPA00048">
    <property type="reaction ID" value="UER00071"/>
</dbReference>
<dbReference type="Proteomes" id="UP000000637">
    <property type="component" value="Chromosome"/>
</dbReference>
<dbReference type="GO" id="GO:0009316">
    <property type="term" value="C:3-isopropylmalate dehydratase complex"/>
    <property type="evidence" value="ECO:0007669"/>
    <property type="project" value="InterPro"/>
</dbReference>
<dbReference type="GO" id="GO:0003861">
    <property type="term" value="F:3-isopropylmalate dehydratase activity"/>
    <property type="evidence" value="ECO:0007669"/>
    <property type="project" value="UniProtKB-UniRule"/>
</dbReference>
<dbReference type="GO" id="GO:0009098">
    <property type="term" value="P:L-leucine biosynthetic process"/>
    <property type="evidence" value="ECO:0007669"/>
    <property type="project" value="UniProtKB-UniRule"/>
</dbReference>
<dbReference type="CDD" id="cd01577">
    <property type="entry name" value="IPMI_Swivel"/>
    <property type="match status" value="1"/>
</dbReference>
<dbReference type="FunFam" id="3.20.19.10:FF:000003">
    <property type="entry name" value="3-isopropylmalate dehydratase small subunit"/>
    <property type="match status" value="1"/>
</dbReference>
<dbReference type="Gene3D" id="3.20.19.10">
    <property type="entry name" value="Aconitase, domain 4"/>
    <property type="match status" value="1"/>
</dbReference>
<dbReference type="HAMAP" id="MF_01031">
    <property type="entry name" value="LeuD_type1"/>
    <property type="match status" value="1"/>
</dbReference>
<dbReference type="InterPro" id="IPR004431">
    <property type="entry name" value="3-IsopropMal_deHydase_ssu"/>
</dbReference>
<dbReference type="InterPro" id="IPR015928">
    <property type="entry name" value="Aconitase/3IPM_dehydase_swvl"/>
</dbReference>
<dbReference type="InterPro" id="IPR000573">
    <property type="entry name" value="AconitaseA/IPMdHydase_ssu_swvl"/>
</dbReference>
<dbReference type="InterPro" id="IPR033940">
    <property type="entry name" value="IPMI_Swivel"/>
</dbReference>
<dbReference type="InterPro" id="IPR050075">
    <property type="entry name" value="LeuD"/>
</dbReference>
<dbReference type="NCBIfam" id="TIGR00171">
    <property type="entry name" value="leuD"/>
    <property type="match status" value="1"/>
</dbReference>
<dbReference type="NCBIfam" id="NF002458">
    <property type="entry name" value="PRK01641.1"/>
    <property type="match status" value="1"/>
</dbReference>
<dbReference type="PANTHER" id="PTHR43345:SF5">
    <property type="entry name" value="3-ISOPROPYLMALATE DEHYDRATASE SMALL SUBUNIT"/>
    <property type="match status" value="1"/>
</dbReference>
<dbReference type="PANTHER" id="PTHR43345">
    <property type="entry name" value="3-ISOPROPYLMALATE DEHYDRATASE SMALL SUBUNIT 2-RELATED-RELATED"/>
    <property type="match status" value="1"/>
</dbReference>
<dbReference type="Pfam" id="PF00694">
    <property type="entry name" value="Aconitase_C"/>
    <property type="match status" value="1"/>
</dbReference>
<dbReference type="SUPFAM" id="SSF52016">
    <property type="entry name" value="LeuD/IlvD-like"/>
    <property type="match status" value="1"/>
</dbReference>